<accession>Q2SML7</accession>
<gene>
    <name evidence="1" type="primary">tpiA</name>
    <name type="ordered locus">HCH_01235</name>
</gene>
<reference key="1">
    <citation type="journal article" date="2005" name="Nucleic Acids Res.">
        <title>Genomic blueprint of Hahella chejuensis, a marine microbe producing an algicidal agent.</title>
        <authorList>
            <person name="Jeong H."/>
            <person name="Yim J.H."/>
            <person name="Lee C."/>
            <person name="Choi S.-H."/>
            <person name="Park Y.K."/>
            <person name="Yoon S.H."/>
            <person name="Hur C.-G."/>
            <person name="Kang H.-Y."/>
            <person name="Kim D."/>
            <person name="Lee H.H."/>
            <person name="Park K.H."/>
            <person name="Park S.-H."/>
            <person name="Park H.-S."/>
            <person name="Lee H.K."/>
            <person name="Oh T.K."/>
            <person name="Kim J.F."/>
        </authorList>
    </citation>
    <scope>NUCLEOTIDE SEQUENCE [LARGE SCALE GENOMIC DNA]</scope>
    <source>
        <strain>KCTC 2396</strain>
    </source>
</reference>
<feature type="chain" id="PRO_0000307477" description="Triosephosphate isomerase">
    <location>
        <begin position="1"/>
        <end position="248"/>
    </location>
</feature>
<feature type="active site" description="Electrophile" evidence="1">
    <location>
        <position position="94"/>
    </location>
</feature>
<feature type="active site" description="Proton acceptor" evidence="1">
    <location>
        <position position="164"/>
    </location>
</feature>
<feature type="binding site" evidence="1">
    <location>
        <begin position="9"/>
        <end position="11"/>
    </location>
    <ligand>
        <name>substrate</name>
    </ligand>
</feature>
<feature type="binding site" evidence="1">
    <location>
        <position position="170"/>
    </location>
    <ligand>
        <name>substrate</name>
    </ligand>
</feature>
<feature type="binding site" evidence="1">
    <location>
        <position position="209"/>
    </location>
    <ligand>
        <name>substrate</name>
    </ligand>
</feature>
<feature type="binding site" evidence="1">
    <location>
        <begin position="230"/>
        <end position="231"/>
    </location>
    <ligand>
        <name>substrate</name>
    </ligand>
</feature>
<evidence type="ECO:0000255" key="1">
    <source>
        <dbReference type="HAMAP-Rule" id="MF_00147"/>
    </source>
</evidence>
<protein>
    <recommendedName>
        <fullName evidence="1">Triosephosphate isomerase</fullName>
        <shortName evidence="1">TIM</shortName>
        <shortName evidence="1">TPI</shortName>
        <ecNumber evidence="1">5.3.1.1</ecNumber>
    </recommendedName>
    <alternativeName>
        <fullName evidence="1">Triose-phosphate isomerase</fullName>
    </alternativeName>
</protein>
<sequence length="248" mass="26653">MRKKLIAGNWKSNGSLERNKALLEGIVNAKALGSVDVVVCPPFPYLQSVESAVSDSMIELGSQNCSATEDGAYTGEVSAKMCADMKCSWVILGHSERRALYAENDEVIACKVKRAVESGLAPILCVGETLADRESGRAEEVTLKQLDAVFMSVQPDDSWVVAYEPVWAIGTGKTASPEDAQSMHKALRNNIRKHFPQIADKIRILYGGSVKSSNAKELFSMPDVDGALVGGASLVSEEFVSIIEAAVE</sequence>
<keyword id="KW-0963">Cytoplasm</keyword>
<keyword id="KW-0312">Gluconeogenesis</keyword>
<keyword id="KW-0324">Glycolysis</keyword>
<keyword id="KW-0413">Isomerase</keyword>
<keyword id="KW-1185">Reference proteome</keyword>
<organism>
    <name type="scientific">Hahella chejuensis (strain KCTC 2396)</name>
    <dbReference type="NCBI Taxonomy" id="349521"/>
    <lineage>
        <taxon>Bacteria</taxon>
        <taxon>Pseudomonadati</taxon>
        <taxon>Pseudomonadota</taxon>
        <taxon>Gammaproteobacteria</taxon>
        <taxon>Oceanospirillales</taxon>
        <taxon>Hahellaceae</taxon>
        <taxon>Hahella</taxon>
    </lineage>
</organism>
<name>TPIS_HAHCH</name>
<proteinExistence type="inferred from homology"/>
<dbReference type="EC" id="5.3.1.1" evidence="1"/>
<dbReference type="EMBL" id="CP000155">
    <property type="protein sequence ID" value="ABC28107.1"/>
    <property type="molecule type" value="Genomic_DNA"/>
</dbReference>
<dbReference type="RefSeq" id="WP_011395180.1">
    <property type="nucleotide sequence ID" value="NC_007645.1"/>
</dbReference>
<dbReference type="SMR" id="Q2SML7"/>
<dbReference type="STRING" id="349521.HCH_01235"/>
<dbReference type="KEGG" id="hch:HCH_01235"/>
<dbReference type="eggNOG" id="COG0149">
    <property type="taxonomic scope" value="Bacteria"/>
</dbReference>
<dbReference type="HOGENOM" id="CLU_024251_2_3_6"/>
<dbReference type="OrthoDB" id="9809429at2"/>
<dbReference type="UniPathway" id="UPA00109">
    <property type="reaction ID" value="UER00189"/>
</dbReference>
<dbReference type="UniPathway" id="UPA00138"/>
<dbReference type="Proteomes" id="UP000000238">
    <property type="component" value="Chromosome"/>
</dbReference>
<dbReference type="GO" id="GO:0005829">
    <property type="term" value="C:cytosol"/>
    <property type="evidence" value="ECO:0007669"/>
    <property type="project" value="TreeGrafter"/>
</dbReference>
<dbReference type="GO" id="GO:0004807">
    <property type="term" value="F:triose-phosphate isomerase activity"/>
    <property type="evidence" value="ECO:0007669"/>
    <property type="project" value="UniProtKB-UniRule"/>
</dbReference>
<dbReference type="GO" id="GO:0006094">
    <property type="term" value="P:gluconeogenesis"/>
    <property type="evidence" value="ECO:0007669"/>
    <property type="project" value="UniProtKB-UniRule"/>
</dbReference>
<dbReference type="GO" id="GO:0046166">
    <property type="term" value="P:glyceraldehyde-3-phosphate biosynthetic process"/>
    <property type="evidence" value="ECO:0007669"/>
    <property type="project" value="TreeGrafter"/>
</dbReference>
<dbReference type="GO" id="GO:0019563">
    <property type="term" value="P:glycerol catabolic process"/>
    <property type="evidence" value="ECO:0007669"/>
    <property type="project" value="TreeGrafter"/>
</dbReference>
<dbReference type="GO" id="GO:0006096">
    <property type="term" value="P:glycolytic process"/>
    <property type="evidence" value="ECO:0007669"/>
    <property type="project" value="UniProtKB-UniRule"/>
</dbReference>
<dbReference type="CDD" id="cd00311">
    <property type="entry name" value="TIM"/>
    <property type="match status" value="1"/>
</dbReference>
<dbReference type="FunFam" id="3.20.20.70:FF:000020">
    <property type="entry name" value="Triosephosphate isomerase"/>
    <property type="match status" value="1"/>
</dbReference>
<dbReference type="Gene3D" id="3.20.20.70">
    <property type="entry name" value="Aldolase class I"/>
    <property type="match status" value="1"/>
</dbReference>
<dbReference type="HAMAP" id="MF_00147_B">
    <property type="entry name" value="TIM_B"/>
    <property type="match status" value="1"/>
</dbReference>
<dbReference type="InterPro" id="IPR013785">
    <property type="entry name" value="Aldolase_TIM"/>
</dbReference>
<dbReference type="InterPro" id="IPR035990">
    <property type="entry name" value="TIM_sf"/>
</dbReference>
<dbReference type="InterPro" id="IPR022896">
    <property type="entry name" value="TrioseP_Isoase_bac/euk"/>
</dbReference>
<dbReference type="InterPro" id="IPR000652">
    <property type="entry name" value="Triosephosphate_isomerase"/>
</dbReference>
<dbReference type="InterPro" id="IPR020861">
    <property type="entry name" value="Triosephosphate_isomerase_AS"/>
</dbReference>
<dbReference type="NCBIfam" id="TIGR00419">
    <property type="entry name" value="tim"/>
    <property type="match status" value="1"/>
</dbReference>
<dbReference type="PANTHER" id="PTHR21139">
    <property type="entry name" value="TRIOSEPHOSPHATE ISOMERASE"/>
    <property type="match status" value="1"/>
</dbReference>
<dbReference type="PANTHER" id="PTHR21139:SF42">
    <property type="entry name" value="TRIOSEPHOSPHATE ISOMERASE"/>
    <property type="match status" value="1"/>
</dbReference>
<dbReference type="Pfam" id="PF00121">
    <property type="entry name" value="TIM"/>
    <property type="match status" value="1"/>
</dbReference>
<dbReference type="SUPFAM" id="SSF51351">
    <property type="entry name" value="Triosephosphate isomerase (TIM)"/>
    <property type="match status" value="1"/>
</dbReference>
<dbReference type="PROSITE" id="PS00171">
    <property type="entry name" value="TIM_1"/>
    <property type="match status" value="1"/>
</dbReference>
<dbReference type="PROSITE" id="PS51440">
    <property type="entry name" value="TIM_2"/>
    <property type="match status" value="1"/>
</dbReference>
<comment type="function">
    <text evidence="1">Involved in the gluconeogenesis. Catalyzes stereospecifically the conversion of dihydroxyacetone phosphate (DHAP) to D-glyceraldehyde-3-phosphate (G3P).</text>
</comment>
<comment type="catalytic activity">
    <reaction evidence="1">
        <text>D-glyceraldehyde 3-phosphate = dihydroxyacetone phosphate</text>
        <dbReference type="Rhea" id="RHEA:18585"/>
        <dbReference type="ChEBI" id="CHEBI:57642"/>
        <dbReference type="ChEBI" id="CHEBI:59776"/>
        <dbReference type="EC" id="5.3.1.1"/>
    </reaction>
</comment>
<comment type="pathway">
    <text evidence="1">Carbohydrate biosynthesis; gluconeogenesis.</text>
</comment>
<comment type="pathway">
    <text evidence="1">Carbohydrate degradation; glycolysis; D-glyceraldehyde 3-phosphate from glycerone phosphate: step 1/1.</text>
</comment>
<comment type="subunit">
    <text evidence="1">Homodimer.</text>
</comment>
<comment type="subcellular location">
    <subcellularLocation>
        <location evidence="1">Cytoplasm</location>
    </subcellularLocation>
</comment>
<comment type="similarity">
    <text evidence="1">Belongs to the triosephosphate isomerase family.</text>
</comment>